<keyword id="KW-0249">Electron transport</keyword>
<keyword id="KW-0349">Heme</keyword>
<keyword id="KW-0408">Iron</keyword>
<keyword id="KW-0472">Membrane</keyword>
<keyword id="KW-0479">Metal-binding</keyword>
<keyword id="KW-0496">Mitochondrion</keyword>
<keyword id="KW-0999">Mitochondrion inner membrane</keyword>
<keyword id="KW-0679">Respiratory chain</keyword>
<keyword id="KW-0812">Transmembrane</keyword>
<keyword id="KW-1133">Transmembrane helix</keyword>
<keyword id="KW-0813">Transport</keyword>
<keyword id="KW-0830">Ubiquinone</keyword>
<organism>
    <name type="scientific">Microtus yuldaschi</name>
    <name type="common">Juniper mountain vole</name>
    <name type="synonym">Blanfordimys juldaschi</name>
    <dbReference type="NCBI Taxonomy" id="3370257"/>
    <lineage>
        <taxon>Eukaryota</taxon>
        <taxon>Metazoa</taxon>
        <taxon>Chordata</taxon>
        <taxon>Craniata</taxon>
        <taxon>Vertebrata</taxon>
        <taxon>Euteleostomi</taxon>
        <taxon>Mammalia</taxon>
        <taxon>Eutheria</taxon>
        <taxon>Euarchontoglires</taxon>
        <taxon>Glires</taxon>
        <taxon>Rodentia</taxon>
        <taxon>Myomorpha</taxon>
        <taxon>Muroidea</taxon>
        <taxon>Cricetidae</taxon>
        <taxon>Arvicolinae</taxon>
        <taxon>Microtus</taxon>
    </lineage>
</organism>
<protein>
    <recommendedName>
        <fullName>Cytochrome b</fullName>
    </recommendedName>
    <alternativeName>
        <fullName>Complex III subunit 3</fullName>
    </alternativeName>
    <alternativeName>
        <fullName>Complex III subunit III</fullName>
    </alternativeName>
    <alternativeName>
        <fullName>Cytochrome b-c1 complex subunit 3</fullName>
    </alternativeName>
    <alternativeName>
        <fullName>Ubiquinol-cytochrome-c reductase complex cytochrome b subunit</fullName>
    </alternativeName>
</protein>
<reference key="1">
    <citation type="journal article" date="2004" name="Mol. Phylogenet. Evol.">
        <title>Molecular phylogeny of the speciose vole genus Microtus (Arvicolinae, Rodentia) inferred from mitochondrial DNA sequences.</title>
        <authorList>
            <person name="Jaarola M."/>
            <person name="Martinkova N."/>
            <person name="Gunduz I."/>
            <person name="Brunhoff C."/>
            <person name="Zima J."/>
            <person name="Nadachowski A."/>
            <person name="Amori G."/>
            <person name="Bulatova N.S."/>
            <person name="Chondropoulos B."/>
            <person name="Fraguedakis-Tsolis S."/>
            <person name="Gonzalez-Esteban J."/>
            <person name="Lopez-Fuster M.J."/>
            <person name="Kandaurov A.S."/>
            <person name="Kefelioglu H."/>
            <person name="Mathias M.L."/>
            <person name="Villate I."/>
            <person name="Searle J.B."/>
        </authorList>
    </citation>
    <scope>NUCLEOTIDE SEQUENCE [GENOMIC DNA]</scope>
</reference>
<sequence>MTNIRKKHPLIKIINHSFIDLPAPSNISSWWNFGSLLGLCLIIQILTGLFLAMHYTSDTATAFSSVAHICRDVNYGWLIRYMHANGASMFFICLFLHVGRGVYYGSYNMIETWNMGIILLFAVMATAFMGYVLPWGQMSFWGATVITNLLSAIPYIGTTLVEWIWGGFSVDKATLTRFFAFHFILPFIITALVLVHLLFLHETGSNNPTGLNSDADKIPFHPYYTIKDFLGVLILLMVSMILTLFFPDVLGDPDNYTPANPLNTPPHIKPEWYFLFAYAILRSIPNKLGGVLALILSILILALMPLLHTSKQRALTFRPITQTMYWILVADLFILTWIGGQPVEYPFIIIGQAASIAYFTIIVILMPIAGMIENNIMDLD</sequence>
<gene>
    <name type="primary">MT-CYB</name>
    <name type="synonym">COB</name>
    <name type="synonym">CYTB</name>
    <name type="synonym">MTCYB</name>
</gene>
<comment type="function">
    <text evidence="2">Component of the ubiquinol-cytochrome c reductase complex (complex III or cytochrome b-c1 complex) that is part of the mitochondrial respiratory chain. The b-c1 complex mediates electron transfer from ubiquinol to cytochrome c. Contributes to the generation of a proton gradient across the mitochondrial membrane that is then used for ATP synthesis.</text>
</comment>
<comment type="cofactor">
    <cofactor evidence="2">
        <name>heme b</name>
        <dbReference type="ChEBI" id="CHEBI:60344"/>
    </cofactor>
    <text evidence="2">Binds 2 heme b groups non-covalently.</text>
</comment>
<comment type="subunit">
    <text evidence="2">The cytochrome bc1 complex contains 11 subunits: 3 respiratory subunits (MT-CYB, CYC1 and UQCRFS1), 2 core proteins (UQCRC1 and UQCRC2) and 6 low-molecular weight proteins (UQCRH/QCR6, UQCRB/QCR7, UQCRQ/QCR8, UQCR10/QCR9, UQCR11/QCR10 and a cleavage product of UQCRFS1). This cytochrome bc1 complex then forms a dimer.</text>
</comment>
<comment type="subcellular location">
    <subcellularLocation>
        <location evidence="2">Mitochondrion inner membrane</location>
        <topology evidence="2">Multi-pass membrane protein</topology>
    </subcellularLocation>
</comment>
<comment type="miscellaneous">
    <text evidence="1">Heme 1 (or BL or b562) is low-potential and absorbs at about 562 nm, and heme 2 (or BH or b566) is high-potential and absorbs at about 566 nm.</text>
</comment>
<comment type="similarity">
    <text evidence="3 4">Belongs to the cytochrome b family.</text>
</comment>
<comment type="caution">
    <text evidence="2">The full-length protein contains only eight transmembrane helices, not nine as predicted by bioinformatics tools.</text>
</comment>
<name>CYB_MICYU</name>
<evidence type="ECO:0000250" key="1"/>
<evidence type="ECO:0000250" key="2">
    <source>
        <dbReference type="UniProtKB" id="P00157"/>
    </source>
</evidence>
<evidence type="ECO:0000255" key="3">
    <source>
        <dbReference type="PROSITE-ProRule" id="PRU00967"/>
    </source>
</evidence>
<evidence type="ECO:0000255" key="4">
    <source>
        <dbReference type="PROSITE-ProRule" id="PRU00968"/>
    </source>
</evidence>
<feature type="chain" id="PRO_0000255082" description="Cytochrome b">
    <location>
        <begin position="1"/>
        <end position="380"/>
    </location>
</feature>
<feature type="transmembrane region" description="Helical" evidence="2">
    <location>
        <begin position="33"/>
        <end position="53"/>
    </location>
</feature>
<feature type="transmembrane region" description="Helical" evidence="2">
    <location>
        <begin position="77"/>
        <end position="98"/>
    </location>
</feature>
<feature type="transmembrane region" description="Helical" evidence="2">
    <location>
        <begin position="113"/>
        <end position="133"/>
    </location>
</feature>
<feature type="transmembrane region" description="Helical" evidence="2">
    <location>
        <begin position="178"/>
        <end position="198"/>
    </location>
</feature>
<feature type="transmembrane region" description="Helical" evidence="2">
    <location>
        <begin position="226"/>
        <end position="246"/>
    </location>
</feature>
<feature type="transmembrane region" description="Helical" evidence="2">
    <location>
        <begin position="288"/>
        <end position="308"/>
    </location>
</feature>
<feature type="transmembrane region" description="Helical" evidence="2">
    <location>
        <begin position="320"/>
        <end position="340"/>
    </location>
</feature>
<feature type="transmembrane region" description="Helical" evidence="2">
    <location>
        <begin position="347"/>
        <end position="367"/>
    </location>
</feature>
<feature type="binding site" description="axial binding residue" evidence="2">
    <location>
        <position position="83"/>
    </location>
    <ligand>
        <name>heme b</name>
        <dbReference type="ChEBI" id="CHEBI:60344"/>
        <label>b562</label>
    </ligand>
    <ligandPart>
        <name>Fe</name>
        <dbReference type="ChEBI" id="CHEBI:18248"/>
    </ligandPart>
</feature>
<feature type="binding site" description="axial binding residue" evidence="2">
    <location>
        <position position="97"/>
    </location>
    <ligand>
        <name>heme b</name>
        <dbReference type="ChEBI" id="CHEBI:60344"/>
        <label>b566</label>
    </ligand>
    <ligandPart>
        <name>Fe</name>
        <dbReference type="ChEBI" id="CHEBI:18248"/>
    </ligandPart>
</feature>
<feature type="binding site" description="axial binding residue" evidence="2">
    <location>
        <position position="182"/>
    </location>
    <ligand>
        <name>heme b</name>
        <dbReference type="ChEBI" id="CHEBI:60344"/>
        <label>b562</label>
    </ligand>
    <ligandPart>
        <name>Fe</name>
        <dbReference type="ChEBI" id="CHEBI:18248"/>
    </ligandPart>
</feature>
<feature type="binding site" description="axial binding residue" evidence="2">
    <location>
        <position position="196"/>
    </location>
    <ligand>
        <name>heme b</name>
        <dbReference type="ChEBI" id="CHEBI:60344"/>
        <label>b566</label>
    </ligand>
    <ligandPart>
        <name>Fe</name>
        <dbReference type="ChEBI" id="CHEBI:18248"/>
    </ligandPart>
</feature>
<feature type="binding site" evidence="2">
    <location>
        <position position="201"/>
    </location>
    <ligand>
        <name>a ubiquinone</name>
        <dbReference type="ChEBI" id="CHEBI:16389"/>
    </ligand>
</feature>
<proteinExistence type="inferred from homology"/>
<geneLocation type="mitochondrion"/>
<accession>Q6JDS8</accession>
<dbReference type="EMBL" id="AY513808">
    <property type="protein sequence ID" value="AAS82800.1"/>
    <property type="molecule type" value="Genomic_DNA"/>
</dbReference>
<dbReference type="SMR" id="Q6JDS8"/>
<dbReference type="GO" id="GO:0005743">
    <property type="term" value="C:mitochondrial inner membrane"/>
    <property type="evidence" value="ECO:0007669"/>
    <property type="project" value="UniProtKB-SubCell"/>
</dbReference>
<dbReference type="GO" id="GO:0045275">
    <property type="term" value="C:respiratory chain complex III"/>
    <property type="evidence" value="ECO:0007669"/>
    <property type="project" value="InterPro"/>
</dbReference>
<dbReference type="GO" id="GO:0046872">
    <property type="term" value="F:metal ion binding"/>
    <property type="evidence" value="ECO:0007669"/>
    <property type="project" value="UniProtKB-KW"/>
</dbReference>
<dbReference type="GO" id="GO:0008121">
    <property type="term" value="F:ubiquinol-cytochrome-c reductase activity"/>
    <property type="evidence" value="ECO:0007669"/>
    <property type="project" value="InterPro"/>
</dbReference>
<dbReference type="GO" id="GO:0006122">
    <property type="term" value="P:mitochondrial electron transport, ubiquinol to cytochrome c"/>
    <property type="evidence" value="ECO:0007669"/>
    <property type="project" value="TreeGrafter"/>
</dbReference>
<dbReference type="CDD" id="cd00290">
    <property type="entry name" value="cytochrome_b_C"/>
    <property type="match status" value="1"/>
</dbReference>
<dbReference type="CDD" id="cd00284">
    <property type="entry name" value="Cytochrome_b_N"/>
    <property type="match status" value="1"/>
</dbReference>
<dbReference type="FunFam" id="1.20.810.10:FF:000002">
    <property type="entry name" value="Cytochrome b"/>
    <property type="match status" value="1"/>
</dbReference>
<dbReference type="Gene3D" id="1.20.810.10">
    <property type="entry name" value="Cytochrome Bc1 Complex, Chain C"/>
    <property type="match status" value="1"/>
</dbReference>
<dbReference type="InterPro" id="IPR005798">
    <property type="entry name" value="Cyt_b/b6_C"/>
</dbReference>
<dbReference type="InterPro" id="IPR036150">
    <property type="entry name" value="Cyt_b/b6_C_sf"/>
</dbReference>
<dbReference type="InterPro" id="IPR005797">
    <property type="entry name" value="Cyt_b/b6_N"/>
</dbReference>
<dbReference type="InterPro" id="IPR027387">
    <property type="entry name" value="Cytb/b6-like_sf"/>
</dbReference>
<dbReference type="InterPro" id="IPR030689">
    <property type="entry name" value="Cytochrome_b"/>
</dbReference>
<dbReference type="InterPro" id="IPR048260">
    <property type="entry name" value="Cytochrome_b_C_euk/bac"/>
</dbReference>
<dbReference type="InterPro" id="IPR048259">
    <property type="entry name" value="Cytochrome_b_N_euk/bac"/>
</dbReference>
<dbReference type="InterPro" id="IPR016174">
    <property type="entry name" value="Di-haem_cyt_TM"/>
</dbReference>
<dbReference type="PANTHER" id="PTHR19271">
    <property type="entry name" value="CYTOCHROME B"/>
    <property type="match status" value="1"/>
</dbReference>
<dbReference type="PANTHER" id="PTHR19271:SF16">
    <property type="entry name" value="CYTOCHROME B"/>
    <property type="match status" value="1"/>
</dbReference>
<dbReference type="Pfam" id="PF00032">
    <property type="entry name" value="Cytochrom_B_C"/>
    <property type="match status" value="1"/>
</dbReference>
<dbReference type="Pfam" id="PF00033">
    <property type="entry name" value="Cytochrome_B"/>
    <property type="match status" value="1"/>
</dbReference>
<dbReference type="PIRSF" id="PIRSF038885">
    <property type="entry name" value="COB"/>
    <property type="match status" value="1"/>
</dbReference>
<dbReference type="SUPFAM" id="SSF81648">
    <property type="entry name" value="a domain/subunit of cytochrome bc1 complex (Ubiquinol-cytochrome c reductase)"/>
    <property type="match status" value="1"/>
</dbReference>
<dbReference type="SUPFAM" id="SSF81342">
    <property type="entry name" value="Transmembrane di-heme cytochromes"/>
    <property type="match status" value="1"/>
</dbReference>
<dbReference type="PROSITE" id="PS51003">
    <property type="entry name" value="CYTB_CTER"/>
    <property type="match status" value="1"/>
</dbReference>
<dbReference type="PROSITE" id="PS51002">
    <property type="entry name" value="CYTB_NTER"/>
    <property type="match status" value="1"/>
</dbReference>